<sequence length="120" mass="13994">MFLLYEYDIFWAFLIISSLIPILAFFISGILAPIRKGPEKLSSYESGIEPMGDAWFQFRIRYYMFALVFVVFDVETVFLYPWAMSFDVLGLSVFLEAFVFVLILIVGLVYAWRKGALEWS</sequence>
<accession>Q06RC4</accession>
<name>NU3C_JASNU</name>
<organism>
    <name type="scientific">Jasminum nudiflorum</name>
    <name type="common">Winter jasmine</name>
    <dbReference type="NCBI Taxonomy" id="126431"/>
    <lineage>
        <taxon>Eukaryota</taxon>
        <taxon>Viridiplantae</taxon>
        <taxon>Streptophyta</taxon>
        <taxon>Embryophyta</taxon>
        <taxon>Tracheophyta</taxon>
        <taxon>Spermatophyta</taxon>
        <taxon>Magnoliopsida</taxon>
        <taxon>eudicotyledons</taxon>
        <taxon>Gunneridae</taxon>
        <taxon>Pentapetalae</taxon>
        <taxon>asterids</taxon>
        <taxon>lamiids</taxon>
        <taxon>Lamiales</taxon>
        <taxon>Oleaceae</taxon>
        <taxon>Jasmineae</taxon>
        <taxon>Jasminum</taxon>
    </lineage>
</organism>
<protein>
    <recommendedName>
        <fullName evidence="1">NAD(P)H-quinone oxidoreductase subunit 3, chloroplastic</fullName>
        <ecNumber evidence="1">7.1.1.-</ecNumber>
    </recommendedName>
    <alternativeName>
        <fullName evidence="1">NAD(P)H dehydrogenase subunit 3</fullName>
    </alternativeName>
    <alternativeName>
        <fullName evidence="1">NADH-plastoquinone oxidoreductase subunit 3</fullName>
    </alternativeName>
</protein>
<keyword id="KW-0150">Chloroplast</keyword>
<keyword id="KW-0472">Membrane</keyword>
<keyword id="KW-0520">NAD</keyword>
<keyword id="KW-0521">NADP</keyword>
<keyword id="KW-0934">Plastid</keyword>
<keyword id="KW-0618">Plastoquinone</keyword>
<keyword id="KW-0874">Quinone</keyword>
<keyword id="KW-0793">Thylakoid</keyword>
<keyword id="KW-1278">Translocase</keyword>
<keyword id="KW-0812">Transmembrane</keyword>
<keyword id="KW-1133">Transmembrane helix</keyword>
<keyword id="KW-0813">Transport</keyword>
<comment type="function">
    <text evidence="1">NDH shuttles electrons from NAD(P)H:plastoquinone, via FMN and iron-sulfur (Fe-S) centers, to quinones in the photosynthetic chain and possibly in a chloroplast respiratory chain. The immediate electron acceptor for the enzyme in this species is believed to be plastoquinone. Couples the redox reaction to proton translocation, and thus conserves the redox energy in a proton gradient.</text>
</comment>
<comment type="catalytic activity">
    <reaction evidence="1">
        <text>a plastoquinone + NADH + (n+1) H(+)(in) = a plastoquinol + NAD(+) + n H(+)(out)</text>
        <dbReference type="Rhea" id="RHEA:42608"/>
        <dbReference type="Rhea" id="RHEA-COMP:9561"/>
        <dbReference type="Rhea" id="RHEA-COMP:9562"/>
        <dbReference type="ChEBI" id="CHEBI:15378"/>
        <dbReference type="ChEBI" id="CHEBI:17757"/>
        <dbReference type="ChEBI" id="CHEBI:57540"/>
        <dbReference type="ChEBI" id="CHEBI:57945"/>
        <dbReference type="ChEBI" id="CHEBI:62192"/>
    </reaction>
</comment>
<comment type="catalytic activity">
    <reaction evidence="1">
        <text>a plastoquinone + NADPH + (n+1) H(+)(in) = a plastoquinol + NADP(+) + n H(+)(out)</text>
        <dbReference type="Rhea" id="RHEA:42612"/>
        <dbReference type="Rhea" id="RHEA-COMP:9561"/>
        <dbReference type="Rhea" id="RHEA-COMP:9562"/>
        <dbReference type="ChEBI" id="CHEBI:15378"/>
        <dbReference type="ChEBI" id="CHEBI:17757"/>
        <dbReference type="ChEBI" id="CHEBI:57783"/>
        <dbReference type="ChEBI" id="CHEBI:58349"/>
        <dbReference type="ChEBI" id="CHEBI:62192"/>
    </reaction>
</comment>
<comment type="subunit">
    <text evidence="1">NDH is composed of at least 16 different subunits, 5 of which are encoded in the nucleus.</text>
</comment>
<comment type="subcellular location">
    <subcellularLocation>
        <location evidence="1">Plastid</location>
        <location evidence="1">Chloroplast thylakoid membrane</location>
        <topology evidence="1">Multi-pass membrane protein</topology>
    </subcellularLocation>
</comment>
<comment type="similarity">
    <text evidence="1">Belongs to the complex I subunit 3 family.</text>
</comment>
<geneLocation type="chloroplast"/>
<dbReference type="EC" id="7.1.1.-" evidence="1"/>
<dbReference type="EMBL" id="DQ673255">
    <property type="protein sequence ID" value="ABG74635.1"/>
    <property type="molecule type" value="Genomic_DNA"/>
</dbReference>
<dbReference type="RefSeq" id="YP_778497.1">
    <property type="nucleotide sequence ID" value="NC_008407.1"/>
</dbReference>
<dbReference type="SMR" id="Q06RC4"/>
<dbReference type="GeneID" id="4319849"/>
<dbReference type="GO" id="GO:0009535">
    <property type="term" value="C:chloroplast thylakoid membrane"/>
    <property type="evidence" value="ECO:0007669"/>
    <property type="project" value="UniProtKB-SubCell"/>
</dbReference>
<dbReference type="GO" id="GO:0030964">
    <property type="term" value="C:NADH dehydrogenase complex"/>
    <property type="evidence" value="ECO:0007669"/>
    <property type="project" value="TreeGrafter"/>
</dbReference>
<dbReference type="GO" id="GO:0008137">
    <property type="term" value="F:NADH dehydrogenase (ubiquinone) activity"/>
    <property type="evidence" value="ECO:0007669"/>
    <property type="project" value="InterPro"/>
</dbReference>
<dbReference type="GO" id="GO:0048038">
    <property type="term" value="F:quinone binding"/>
    <property type="evidence" value="ECO:0007669"/>
    <property type="project" value="UniProtKB-KW"/>
</dbReference>
<dbReference type="GO" id="GO:0019684">
    <property type="term" value="P:photosynthesis, light reaction"/>
    <property type="evidence" value="ECO:0007669"/>
    <property type="project" value="UniProtKB-UniRule"/>
</dbReference>
<dbReference type="FunFam" id="1.20.58.1610:FF:000001">
    <property type="entry name" value="NAD(P)H-quinone oxidoreductase subunit 3, chloroplastic"/>
    <property type="match status" value="1"/>
</dbReference>
<dbReference type="Gene3D" id="1.20.58.1610">
    <property type="entry name" value="NADH:ubiquinone/plastoquinone oxidoreductase, chain 3"/>
    <property type="match status" value="1"/>
</dbReference>
<dbReference type="HAMAP" id="MF_01394">
    <property type="entry name" value="NDH1_NuoA"/>
    <property type="match status" value="1"/>
</dbReference>
<dbReference type="InterPro" id="IPR023043">
    <property type="entry name" value="NAD(P)H_OxRDtase_bac/plastid"/>
</dbReference>
<dbReference type="InterPro" id="IPR000440">
    <property type="entry name" value="NADH_UbQ/plastoQ_OxRdtase_su3"/>
</dbReference>
<dbReference type="InterPro" id="IPR038430">
    <property type="entry name" value="NDAH_ubi_oxred_su3_sf"/>
</dbReference>
<dbReference type="PANTHER" id="PTHR11058">
    <property type="entry name" value="NADH-UBIQUINONE OXIDOREDUCTASE CHAIN 3"/>
    <property type="match status" value="1"/>
</dbReference>
<dbReference type="PANTHER" id="PTHR11058:SF9">
    <property type="entry name" value="NADH-UBIQUINONE OXIDOREDUCTASE CHAIN 3"/>
    <property type="match status" value="1"/>
</dbReference>
<dbReference type="Pfam" id="PF00507">
    <property type="entry name" value="Oxidored_q4"/>
    <property type="match status" value="1"/>
</dbReference>
<gene>
    <name evidence="1" type="primary">ndhC</name>
    <name type="ORF">JNC0560</name>
</gene>
<proteinExistence type="inferred from homology"/>
<feature type="chain" id="PRO_0000362842" description="NAD(P)H-quinone oxidoreductase subunit 3, chloroplastic">
    <location>
        <begin position="1"/>
        <end position="120"/>
    </location>
</feature>
<feature type="transmembrane region" description="Helical" evidence="1">
    <location>
        <begin position="9"/>
        <end position="29"/>
    </location>
</feature>
<feature type="transmembrane region" description="Helical" evidence="1">
    <location>
        <begin position="64"/>
        <end position="84"/>
    </location>
</feature>
<feature type="transmembrane region" description="Helical" evidence="1">
    <location>
        <begin position="88"/>
        <end position="108"/>
    </location>
</feature>
<reference key="1">
    <citation type="journal article" date="2007" name="Mol. Biol. Evol.">
        <title>Gene relocations within chloroplast genomes of Jasminum and Menodora (Oleaceae) are due to multiple, overlapping inversions.</title>
        <authorList>
            <person name="Lee H.-L."/>
            <person name="Jansen R.K."/>
            <person name="Chumley T.W."/>
            <person name="Kim K.-J."/>
        </authorList>
    </citation>
    <scope>NUCLEOTIDE SEQUENCE [LARGE SCALE GENOMIC DNA]</scope>
</reference>
<evidence type="ECO:0000255" key="1">
    <source>
        <dbReference type="HAMAP-Rule" id="MF_01394"/>
    </source>
</evidence>